<organism>
    <name type="scientific">Escherichia coli O45:K1 (strain S88 / ExPEC)</name>
    <dbReference type="NCBI Taxonomy" id="585035"/>
    <lineage>
        <taxon>Bacteria</taxon>
        <taxon>Pseudomonadati</taxon>
        <taxon>Pseudomonadota</taxon>
        <taxon>Gammaproteobacteria</taxon>
        <taxon>Enterobacterales</taxon>
        <taxon>Enterobacteriaceae</taxon>
        <taxon>Escherichia</taxon>
    </lineage>
</organism>
<sequence>MRVLGIETSCDETGIAIYDDEKGLLANQLYSQVKLHADYGGVVPELASRDHVRKTVPLIQEALKESGLTAKDIDAVAYTAGPGLVGALLVGATVGRSLAFAWDVPAIPVHHMEGHLLAPMLEDNPPEFPFVALLVSGGHTQLISVTGIGQYELLGESIDDAAGEAFDKTAKLLGLDYPGGPLLSKMAAQGTAGRFVFPRPMTDRPGLDFSFSGLKTFAANTIRDNGTDDQTRADIARAFEDAVVDTLMIKCKRALDQTGFKRLVMAGGVSANRTLRAKLAEMMKKRRGEVFYARPEFCTDNGAMIAYAGMVRFKAGATADLGVSVRPRWPLAELPAA</sequence>
<evidence type="ECO:0000255" key="1">
    <source>
        <dbReference type="HAMAP-Rule" id="MF_01445"/>
    </source>
</evidence>
<feature type="chain" id="PRO_1000145974" description="tRNA N6-adenosine threonylcarbamoyltransferase">
    <location>
        <begin position="1"/>
        <end position="337"/>
    </location>
</feature>
<feature type="binding site" evidence="1">
    <location>
        <position position="111"/>
    </location>
    <ligand>
        <name>Fe cation</name>
        <dbReference type="ChEBI" id="CHEBI:24875"/>
    </ligand>
</feature>
<feature type="binding site" evidence="1">
    <location>
        <position position="115"/>
    </location>
    <ligand>
        <name>Fe cation</name>
        <dbReference type="ChEBI" id="CHEBI:24875"/>
    </ligand>
</feature>
<feature type="binding site" evidence="1">
    <location>
        <begin position="134"/>
        <end position="138"/>
    </location>
    <ligand>
        <name>substrate</name>
    </ligand>
</feature>
<feature type="binding site" evidence="1">
    <location>
        <position position="167"/>
    </location>
    <ligand>
        <name>substrate</name>
    </ligand>
</feature>
<feature type="binding site" evidence="1">
    <location>
        <position position="180"/>
    </location>
    <ligand>
        <name>substrate</name>
    </ligand>
</feature>
<feature type="binding site" evidence="1">
    <location>
        <position position="272"/>
    </location>
    <ligand>
        <name>substrate</name>
    </ligand>
</feature>
<feature type="binding site" evidence="1">
    <location>
        <position position="300"/>
    </location>
    <ligand>
        <name>Fe cation</name>
        <dbReference type="ChEBI" id="CHEBI:24875"/>
    </ligand>
</feature>
<reference key="1">
    <citation type="journal article" date="2009" name="PLoS Genet.">
        <title>Organised genome dynamics in the Escherichia coli species results in highly diverse adaptive paths.</title>
        <authorList>
            <person name="Touchon M."/>
            <person name="Hoede C."/>
            <person name="Tenaillon O."/>
            <person name="Barbe V."/>
            <person name="Baeriswyl S."/>
            <person name="Bidet P."/>
            <person name="Bingen E."/>
            <person name="Bonacorsi S."/>
            <person name="Bouchier C."/>
            <person name="Bouvet O."/>
            <person name="Calteau A."/>
            <person name="Chiapello H."/>
            <person name="Clermont O."/>
            <person name="Cruveiller S."/>
            <person name="Danchin A."/>
            <person name="Diard M."/>
            <person name="Dossat C."/>
            <person name="Karoui M.E."/>
            <person name="Frapy E."/>
            <person name="Garry L."/>
            <person name="Ghigo J.M."/>
            <person name="Gilles A.M."/>
            <person name="Johnson J."/>
            <person name="Le Bouguenec C."/>
            <person name="Lescat M."/>
            <person name="Mangenot S."/>
            <person name="Martinez-Jehanne V."/>
            <person name="Matic I."/>
            <person name="Nassif X."/>
            <person name="Oztas S."/>
            <person name="Petit M.A."/>
            <person name="Pichon C."/>
            <person name="Rouy Z."/>
            <person name="Ruf C.S."/>
            <person name="Schneider D."/>
            <person name="Tourret J."/>
            <person name="Vacherie B."/>
            <person name="Vallenet D."/>
            <person name="Medigue C."/>
            <person name="Rocha E.P.C."/>
            <person name="Denamur E."/>
        </authorList>
    </citation>
    <scope>NUCLEOTIDE SEQUENCE [LARGE SCALE GENOMIC DNA]</scope>
    <source>
        <strain>S88 / ExPEC</strain>
    </source>
</reference>
<comment type="function">
    <text evidence="1">Required for the formation of a threonylcarbamoyl group on adenosine at position 37 (t(6)A37) in tRNAs that read codons beginning with adenine. Is involved in the transfer of the threonylcarbamoyl moiety of threonylcarbamoyl-AMP (TC-AMP) to the N6 group of A37, together with TsaE and TsaB. TsaD likely plays a direct catalytic role in this reaction.</text>
</comment>
<comment type="catalytic activity">
    <reaction evidence="1">
        <text>L-threonylcarbamoyladenylate + adenosine(37) in tRNA = N(6)-L-threonylcarbamoyladenosine(37) in tRNA + AMP + H(+)</text>
        <dbReference type="Rhea" id="RHEA:37059"/>
        <dbReference type="Rhea" id="RHEA-COMP:10162"/>
        <dbReference type="Rhea" id="RHEA-COMP:10163"/>
        <dbReference type="ChEBI" id="CHEBI:15378"/>
        <dbReference type="ChEBI" id="CHEBI:73682"/>
        <dbReference type="ChEBI" id="CHEBI:74411"/>
        <dbReference type="ChEBI" id="CHEBI:74418"/>
        <dbReference type="ChEBI" id="CHEBI:456215"/>
        <dbReference type="EC" id="2.3.1.234"/>
    </reaction>
</comment>
<comment type="cofactor">
    <cofactor evidence="1">
        <name>Fe(2+)</name>
        <dbReference type="ChEBI" id="CHEBI:29033"/>
    </cofactor>
    <text evidence="1">Binds 1 Fe(2+) ion per subunit.</text>
</comment>
<comment type="subcellular location">
    <subcellularLocation>
        <location evidence="1">Cytoplasm</location>
    </subcellularLocation>
</comment>
<comment type="similarity">
    <text evidence="1">Belongs to the KAE1 / TsaD family.</text>
</comment>
<proteinExistence type="inferred from homology"/>
<dbReference type="EC" id="2.3.1.234" evidence="1"/>
<dbReference type="EMBL" id="CU928161">
    <property type="protein sequence ID" value="CAR04691.1"/>
    <property type="molecule type" value="Genomic_DNA"/>
</dbReference>
<dbReference type="RefSeq" id="WP_001264377.1">
    <property type="nucleotide sequence ID" value="NC_011742.1"/>
</dbReference>
<dbReference type="SMR" id="B7MB00"/>
<dbReference type="KEGG" id="ecz:ECS88_3462"/>
<dbReference type="HOGENOM" id="CLU_023208_0_2_6"/>
<dbReference type="Proteomes" id="UP000000747">
    <property type="component" value="Chromosome"/>
</dbReference>
<dbReference type="GO" id="GO:0005737">
    <property type="term" value="C:cytoplasm"/>
    <property type="evidence" value="ECO:0007669"/>
    <property type="project" value="UniProtKB-SubCell"/>
</dbReference>
<dbReference type="GO" id="GO:0005506">
    <property type="term" value="F:iron ion binding"/>
    <property type="evidence" value="ECO:0007669"/>
    <property type="project" value="UniProtKB-UniRule"/>
</dbReference>
<dbReference type="GO" id="GO:0061711">
    <property type="term" value="F:N(6)-L-threonylcarbamoyladenine synthase activity"/>
    <property type="evidence" value="ECO:0007669"/>
    <property type="project" value="UniProtKB-EC"/>
</dbReference>
<dbReference type="GO" id="GO:0002949">
    <property type="term" value="P:tRNA threonylcarbamoyladenosine modification"/>
    <property type="evidence" value="ECO:0007669"/>
    <property type="project" value="UniProtKB-UniRule"/>
</dbReference>
<dbReference type="CDD" id="cd24097">
    <property type="entry name" value="ASKHA_NBD_TsaD-like"/>
    <property type="match status" value="1"/>
</dbReference>
<dbReference type="FunFam" id="3.30.420.40:FF:000031">
    <property type="entry name" value="tRNA N6-adenosine threonylcarbamoyltransferase"/>
    <property type="match status" value="1"/>
</dbReference>
<dbReference type="Gene3D" id="3.30.420.40">
    <property type="match status" value="2"/>
</dbReference>
<dbReference type="HAMAP" id="MF_01445">
    <property type="entry name" value="TsaD"/>
    <property type="match status" value="1"/>
</dbReference>
<dbReference type="InterPro" id="IPR043129">
    <property type="entry name" value="ATPase_NBD"/>
</dbReference>
<dbReference type="InterPro" id="IPR000905">
    <property type="entry name" value="Gcp-like_dom"/>
</dbReference>
<dbReference type="InterPro" id="IPR017861">
    <property type="entry name" value="KAE1/TsaD"/>
</dbReference>
<dbReference type="InterPro" id="IPR017860">
    <property type="entry name" value="Peptidase_M22_CS"/>
</dbReference>
<dbReference type="InterPro" id="IPR022450">
    <property type="entry name" value="TsaD"/>
</dbReference>
<dbReference type="NCBIfam" id="TIGR00329">
    <property type="entry name" value="gcp_kae1"/>
    <property type="match status" value="1"/>
</dbReference>
<dbReference type="NCBIfam" id="TIGR03723">
    <property type="entry name" value="T6A_TsaD_YgjD"/>
    <property type="match status" value="1"/>
</dbReference>
<dbReference type="PANTHER" id="PTHR11735">
    <property type="entry name" value="TRNA N6-ADENOSINE THREONYLCARBAMOYLTRANSFERASE"/>
    <property type="match status" value="1"/>
</dbReference>
<dbReference type="PANTHER" id="PTHR11735:SF6">
    <property type="entry name" value="TRNA N6-ADENOSINE THREONYLCARBAMOYLTRANSFERASE, MITOCHONDRIAL"/>
    <property type="match status" value="1"/>
</dbReference>
<dbReference type="Pfam" id="PF00814">
    <property type="entry name" value="TsaD"/>
    <property type="match status" value="1"/>
</dbReference>
<dbReference type="PRINTS" id="PR00789">
    <property type="entry name" value="OSIALOPTASE"/>
</dbReference>
<dbReference type="SUPFAM" id="SSF53067">
    <property type="entry name" value="Actin-like ATPase domain"/>
    <property type="match status" value="1"/>
</dbReference>
<dbReference type="PROSITE" id="PS01016">
    <property type="entry name" value="GLYCOPROTEASE"/>
    <property type="match status" value="1"/>
</dbReference>
<accession>B7MB00</accession>
<protein>
    <recommendedName>
        <fullName evidence="1">tRNA N6-adenosine threonylcarbamoyltransferase</fullName>
        <ecNumber evidence="1">2.3.1.234</ecNumber>
    </recommendedName>
    <alternativeName>
        <fullName evidence="1">N6-L-threonylcarbamoyladenine synthase</fullName>
        <shortName evidence="1">t(6)A synthase</shortName>
    </alternativeName>
    <alternativeName>
        <fullName evidence="1">t(6)A37 threonylcarbamoyladenosine biosynthesis protein TsaD</fullName>
    </alternativeName>
    <alternativeName>
        <fullName evidence="1">tRNA threonylcarbamoyladenosine biosynthesis protein TsaD</fullName>
    </alternativeName>
</protein>
<keyword id="KW-0012">Acyltransferase</keyword>
<keyword id="KW-0963">Cytoplasm</keyword>
<keyword id="KW-0408">Iron</keyword>
<keyword id="KW-0479">Metal-binding</keyword>
<keyword id="KW-1185">Reference proteome</keyword>
<keyword id="KW-0808">Transferase</keyword>
<keyword id="KW-0819">tRNA processing</keyword>
<name>TSAD_ECO45</name>
<gene>
    <name evidence="1" type="primary">tsaD</name>
    <name type="synonym">gcp</name>
    <name type="ordered locus">ECS88_3462</name>
</gene>